<reference key="1">
    <citation type="journal article" date="2001" name="Proc. Natl. Acad. Sci. U.S.A.">
        <title>Genome sequence of an industrial microorganism Streptomyces avermitilis: deducing the ability of producing secondary metabolites.</title>
        <authorList>
            <person name="Omura S."/>
            <person name="Ikeda H."/>
            <person name="Ishikawa J."/>
            <person name="Hanamoto A."/>
            <person name="Takahashi C."/>
            <person name="Shinose M."/>
            <person name="Takahashi Y."/>
            <person name="Horikawa H."/>
            <person name="Nakazawa H."/>
            <person name="Osonoe T."/>
            <person name="Kikuchi H."/>
            <person name="Shiba T."/>
            <person name="Sakaki Y."/>
            <person name="Hattori M."/>
        </authorList>
    </citation>
    <scope>NUCLEOTIDE SEQUENCE [LARGE SCALE GENOMIC DNA]</scope>
    <source>
        <strain>ATCC 31267 / DSM 46492 / JCM 5070 / NBRC 14893 / NCIMB 12804 / NRRL 8165 / MA-4680</strain>
    </source>
</reference>
<reference key="2">
    <citation type="journal article" date="2003" name="Nat. Biotechnol.">
        <title>Complete genome sequence and comparative analysis of the industrial microorganism Streptomyces avermitilis.</title>
        <authorList>
            <person name="Ikeda H."/>
            <person name="Ishikawa J."/>
            <person name="Hanamoto A."/>
            <person name="Shinose M."/>
            <person name="Kikuchi H."/>
            <person name="Shiba T."/>
            <person name="Sakaki Y."/>
            <person name="Hattori M."/>
            <person name="Omura S."/>
        </authorList>
    </citation>
    <scope>NUCLEOTIDE SEQUENCE [LARGE SCALE GENOMIC DNA]</scope>
    <source>
        <strain>ATCC 31267 / DSM 46492 / JCM 5070 / NBRC 14893 / NCIMB 12804 / NRRL 8165 / MA-4680</strain>
    </source>
</reference>
<keyword id="KW-0004">4Fe-4S</keyword>
<keyword id="KW-0408">Iron</keyword>
<keyword id="KW-0411">Iron-sulfur</keyword>
<keyword id="KW-0456">Lyase</keyword>
<keyword id="KW-0479">Metal-binding</keyword>
<keyword id="KW-1185">Reference proteome</keyword>
<keyword id="KW-0949">S-adenosyl-L-methionine</keyword>
<keyword id="KW-0808">Transferase</keyword>
<sequence>MTTSATSGTGPTANSMRRALKRARDGVALDVTEAAVLLQARGEDLDDLTASAARVRDAGLEAAGRAGVITYSKSVFIPLTRLCRDKCHYCTFVTVPGKLRRAGHGMFMSPDEVLDIARKGAALGCKEALITLGDKPEDRWPEAREWLDAHGYDDTIAYVRAISIRILEETGLLPHLNPGVMSWTDFQRLKPVAPSMGMMLETTATRLWSEPGGPHHGSPDKEPAVRLRVLEDAGRSSVPFTSGILIGIGETYEERAESLFALRKISRAYHGIQELIIQNFRAKPDTAMRGMPDAELDELIATVAVARHIMGPRACLQAPPNLVDSEYGRLIGAGIDDWGGVSPLTIDHVNPERPWPQIDLLREQSAQAGFELRERLCVYPEFVQRGEPWLDPRLLPHVRALADPASGLAHADATVEGHPWQEPEEAFVAQGRTDLHHSIDTEGRTGDRRDDFDVVYGDWEALREAAAPGMVPERIDTDVRQALATAANDPTRLTDAEALALLHADGPALDALTRIADDVRKAAVGDDVTYIVTRNINFTNVCYTGCRFCAFAQRRTDADAYTLSLEQVADRAQQAWDVGAVEVCMQGGIHPDLPGTAYFDIAKAVKERVPGMHVHAFSPMEVVNGATRTGLSIREWLTAAKEAGLDSIPGTAAEILDDEVRWVLTKGKLPTATWIEVITTAHELGIRSSSTMMYGHVDQPRHWLGHFRTLARIQQQTGGFTEFVTLPFIHTNAPVYLAGIARPGPTTRDNRAVMAMARLLLHPHIPNIQTSWVKLGTEGAAEMLRSGANDLGGTLMEETISRMAGSSYGSYKSVKDLIAVAEAAGRPAKPRTTLYGEVPQERQRAAAASDGHLPELLPVLD</sequence>
<dbReference type="EC" id="4.3.1.32"/>
<dbReference type="EC" id="2.5.1.147"/>
<dbReference type="EMBL" id="BA000030">
    <property type="protein sequence ID" value="BAC71506.1"/>
    <property type="molecule type" value="Genomic_DNA"/>
</dbReference>
<dbReference type="RefSeq" id="WP_010985225.1">
    <property type="nucleotide sequence ID" value="NZ_JZJK01000090.1"/>
</dbReference>
<dbReference type="SMR" id="Q82GV2"/>
<dbReference type="GeneID" id="41540862"/>
<dbReference type="KEGG" id="sma:SAVERM_3794"/>
<dbReference type="eggNOG" id="COG1060">
    <property type="taxonomic scope" value="Bacteria"/>
</dbReference>
<dbReference type="HOGENOM" id="CLU_010522_1_0_11"/>
<dbReference type="OrthoDB" id="9802027at2"/>
<dbReference type="UniPathway" id="UPA00072"/>
<dbReference type="Proteomes" id="UP000000428">
    <property type="component" value="Chromosome"/>
</dbReference>
<dbReference type="GO" id="GO:0051539">
    <property type="term" value="F:4 iron, 4 sulfur cluster binding"/>
    <property type="evidence" value="ECO:0007669"/>
    <property type="project" value="UniProtKB-KW"/>
</dbReference>
<dbReference type="GO" id="GO:0141093">
    <property type="term" value="F:5-amino-6-(D-ribitylamino)uracil--L-tyrosine 4-hydroxyphenyl transferase activity"/>
    <property type="evidence" value="ECO:0007669"/>
    <property type="project" value="UniProtKB-EC"/>
</dbReference>
<dbReference type="GO" id="GO:0044689">
    <property type="term" value="F:7,8-didemethyl-8-hydroxy-5-deazariboflavin synthase activity"/>
    <property type="evidence" value="ECO:0007669"/>
    <property type="project" value="UniProtKB-EC"/>
</dbReference>
<dbReference type="GO" id="GO:0046872">
    <property type="term" value="F:metal ion binding"/>
    <property type="evidence" value="ECO:0007669"/>
    <property type="project" value="UniProtKB-KW"/>
</dbReference>
<dbReference type="CDD" id="cd01335">
    <property type="entry name" value="Radical_SAM"/>
    <property type="match status" value="2"/>
</dbReference>
<dbReference type="FunFam" id="3.20.20.70:FF:000134">
    <property type="entry name" value="7,8-didemethyl-8-hydroxy-5-deazariboflavin synthase"/>
    <property type="match status" value="1"/>
</dbReference>
<dbReference type="Gene3D" id="3.20.20.70">
    <property type="entry name" value="Aldolase class I"/>
    <property type="match status" value="2"/>
</dbReference>
<dbReference type="HAMAP" id="MF_01611">
    <property type="entry name" value="FO_synth_sub1"/>
    <property type="match status" value="1"/>
</dbReference>
<dbReference type="HAMAP" id="MF_01612">
    <property type="entry name" value="FO_synth_sub2"/>
    <property type="match status" value="1"/>
</dbReference>
<dbReference type="InterPro" id="IPR013785">
    <property type="entry name" value="Aldolase_TIM"/>
</dbReference>
<dbReference type="InterPro" id="IPR019939">
    <property type="entry name" value="CofG_family"/>
</dbReference>
<dbReference type="InterPro" id="IPR045567">
    <property type="entry name" value="CofH/MnqC-like_C"/>
</dbReference>
<dbReference type="InterPro" id="IPR019940">
    <property type="entry name" value="CofH_family"/>
</dbReference>
<dbReference type="InterPro" id="IPR006638">
    <property type="entry name" value="Elp3/MiaA/NifB-like_rSAM"/>
</dbReference>
<dbReference type="InterPro" id="IPR034405">
    <property type="entry name" value="F420"/>
</dbReference>
<dbReference type="InterPro" id="IPR020050">
    <property type="entry name" value="FO_synthase_su2"/>
</dbReference>
<dbReference type="InterPro" id="IPR007197">
    <property type="entry name" value="rSAM"/>
</dbReference>
<dbReference type="NCBIfam" id="TIGR00423">
    <property type="entry name" value="CofH family radical SAM protein"/>
    <property type="match status" value="1"/>
</dbReference>
<dbReference type="NCBIfam" id="TIGR03550">
    <property type="entry name" value="F420_cofG"/>
    <property type="match status" value="1"/>
</dbReference>
<dbReference type="NCBIfam" id="TIGR03551">
    <property type="entry name" value="F420_cofH"/>
    <property type="match status" value="1"/>
</dbReference>
<dbReference type="NCBIfam" id="NF004884">
    <property type="entry name" value="PRK06245.1"/>
    <property type="match status" value="1"/>
</dbReference>
<dbReference type="NCBIfam" id="NF005609">
    <property type="entry name" value="PRK07360.1"/>
    <property type="match status" value="1"/>
</dbReference>
<dbReference type="NCBIfam" id="NF006687">
    <property type="entry name" value="PRK09234.1"/>
    <property type="match status" value="1"/>
</dbReference>
<dbReference type="PANTHER" id="PTHR43076">
    <property type="entry name" value="FO SYNTHASE (COFH)"/>
    <property type="match status" value="1"/>
</dbReference>
<dbReference type="PANTHER" id="PTHR43076:SF1">
    <property type="entry name" value="LIPOYL SYNTHASE 2"/>
    <property type="match status" value="1"/>
</dbReference>
<dbReference type="Pfam" id="PF19288">
    <property type="entry name" value="CofH_C"/>
    <property type="match status" value="1"/>
</dbReference>
<dbReference type="Pfam" id="PF04055">
    <property type="entry name" value="Radical_SAM"/>
    <property type="match status" value="2"/>
</dbReference>
<dbReference type="SFLD" id="SFLDF00293">
    <property type="entry name" value="((2_3_4_5-tetrahydroxypentyl)a"/>
    <property type="match status" value="1"/>
</dbReference>
<dbReference type="SFLD" id="SFLDF00294">
    <property type="entry name" value="7_8-didemethyl-8-hydroxy-5-dea"/>
    <property type="match status" value="1"/>
</dbReference>
<dbReference type="SFLD" id="SFLDG01388">
    <property type="entry name" value="7_8-didemethyl-8-hydroxy-5-dea"/>
    <property type="match status" value="1"/>
</dbReference>
<dbReference type="SFLD" id="SFLDF00343">
    <property type="entry name" value="aminofutalosine_synthase_(mqnE"/>
    <property type="match status" value="1"/>
</dbReference>
<dbReference type="SFLD" id="SFLDS00029">
    <property type="entry name" value="Radical_SAM"/>
    <property type="match status" value="1"/>
</dbReference>
<dbReference type="SMART" id="SM00729">
    <property type="entry name" value="Elp3"/>
    <property type="match status" value="1"/>
</dbReference>
<dbReference type="SUPFAM" id="SSF102114">
    <property type="entry name" value="Radical SAM enzymes"/>
    <property type="match status" value="2"/>
</dbReference>
<dbReference type="PROSITE" id="PS51918">
    <property type="entry name" value="RADICAL_SAM"/>
    <property type="match status" value="2"/>
</dbReference>
<proteinExistence type="inferred from homology"/>
<protein>
    <recommendedName>
        <fullName>FO synthase</fullName>
    </recommendedName>
    <domain>
        <recommendedName>
            <fullName>7,8-didemethyl-8-hydroxy-5-deazariboflavin synthase</fullName>
            <ecNumber>4.3.1.32</ecNumber>
        </recommendedName>
    </domain>
    <domain>
        <recommendedName>
            <fullName>5-amino-6-(D-ribitylamino)uracil--L-tyrosine 4-hydroxyphenyl transferase</fullName>
            <ecNumber>2.5.1.147</ecNumber>
        </recommendedName>
    </domain>
</protein>
<name>FBIC_STRAW</name>
<organism>
    <name type="scientific">Streptomyces avermitilis (strain ATCC 31267 / DSM 46492 / JCM 5070 / NBRC 14893 / NCIMB 12804 / NRRL 8165 / MA-4680)</name>
    <dbReference type="NCBI Taxonomy" id="227882"/>
    <lineage>
        <taxon>Bacteria</taxon>
        <taxon>Bacillati</taxon>
        <taxon>Actinomycetota</taxon>
        <taxon>Actinomycetes</taxon>
        <taxon>Kitasatosporales</taxon>
        <taxon>Streptomycetaceae</taxon>
        <taxon>Streptomyces</taxon>
    </lineage>
</organism>
<comment type="function">
    <text>Catalyzes the radical-mediated synthesis of 7,8-didemethyl-8-hydroxy-5-deazariboflavin (FO) from 5-amino-6-(D-ribitylamino)uracil and L-tyrosine.</text>
</comment>
<comment type="catalytic activity">
    <reaction>
        <text>5-amino-6-(D-ribitylamino)uracil + L-tyrosine + S-adenosyl-L-methionine = 5-amino-5-(4-hydroxybenzyl)-6-(D-ribitylimino)-5,6-dihydrouracil + 2-iminoacetate + 5'-deoxyadenosine + L-methionine + H(+)</text>
        <dbReference type="Rhea" id="RHEA:55200"/>
        <dbReference type="ChEBI" id="CHEBI:15378"/>
        <dbReference type="ChEBI" id="CHEBI:15934"/>
        <dbReference type="ChEBI" id="CHEBI:17319"/>
        <dbReference type="ChEBI" id="CHEBI:57844"/>
        <dbReference type="ChEBI" id="CHEBI:58315"/>
        <dbReference type="ChEBI" id="CHEBI:59789"/>
        <dbReference type="ChEBI" id="CHEBI:77846"/>
        <dbReference type="ChEBI" id="CHEBI:85936"/>
        <dbReference type="EC" id="2.5.1.147"/>
    </reaction>
</comment>
<comment type="catalytic activity">
    <reaction>
        <text>5-amino-5-(4-hydroxybenzyl)-6-(D-ribitylimino)-5,6-dihydrouracil + S-adenosyl-L-methionine = 7,8-didemethyl-8-hydroxy-5-deazariboflavin + 5'-deoxyadenosine + L-methionine + NH4(+) + H(+)</text>
        <dbReference type="Rhea" id="RHEA:55204"/>
        <dbReference type="ChEBI" id="CHEBI:15378"/>
        <dbReference type="ChEBI" id="CHEBI:17319"/>
        <dbReference type="ChEBI" id="CHEBI:28938"/>
        <dbReference type="ChEBI" id="CHEBI:57844"/>
        <dbReference type="ChEBI" id="CHEBI:59789"/>
        <dbReference type="ChEBI" id="CHEBI:59904"/>
        <dbReference type="ChEBI" id="CHEBI:85936"/>
        <dbReference type="EC" id="4.3.1.32"/>
    </reaction>
</comment>
<comment type="cofactor">
    <cofactor evidence="1">
        <name>[4Fe-4S] cluster</name>
        <dbReference type="ChEBI" id="CHEBI:49883"/>
    </cofactor>
    <text evidence="1">Binds 2 [4Fe-4S] clusters. The clusters are coordinated with 3 cysteines and an exchangeable S-adenosyl-L-methionine.</text>
</comment>
<comment type="pathway">
    <text>Cofactor biosynthesis; coenzyme F0 biosynthesis.</text>
</comment>
<comment type="similarity">
    <text evidence="3">In the N-terminal section; belongs to the radical SAM superfamily. CofG family.</text>
</comment>
<comment type="similarity">
    <text evidence="3">In the C-terminal section; belongs to the radical SAM superfamily. CofH family.</text>
</comment>
<accession>Q82GV2</accession>
<gene>
    <name type="primary">fbiC</name>
    <name type="ordered locus">SAV_3794</name>
</gene>
<feature type="chain" id="PRO_0000147774" description="FO synthase">
    <location>
        <begin position="1"/>
        <end position="861"/>
    </location>
</feature>
<feature type="domain" description="Radical SAM core 1" evidence="2">
    <location>
        <begin position="69"/>
        <end position="319"/>
    </location>
</feature>
<feature type="domain" description="Radical SAM core 2" evidence="2">
    <location>
        <begin position="528"/>
        <end position="763"/>
    </location>
</feature>
<feature type="region of interest" description="CofG-like">
    <location>
        <begin position="70"/>
        <end position="401"/>
    </location>
</feature>
<feature type="region of interest" description="CofH-like">
    <location>
        <begin position="505"/>
        <end position="838"/>
    </location>
</feature>
<feature type="binding site" evidence="1">
    <location>
        <position position="83"/>
    </location>
    <ligand>
        <name>[4Fe-4S] cluster</name>
        <dbReference type="ChEBI" id="CHEBI:49883"/>
        <label>1</label>
        <note>4Fe-4S-S-AdoMet</note>
    </ligand>
</feature>
<feature type="binding site" evidence="1">
    <location>
        <position position="87"/>
    </location>
    <ligand>
        <name>[4Fe-4S] cluster</name>
        <dbReference type="ChEBI" id="CHEBI:49883"/>
        <label>1</label>
        <note>4Fe-4S-S-AdoMet</note>
    </ligand>
</feature>
<feature type="binding site" evidence="1">
    <location>
        <position position="90"/>
    </location>
    <ligand>
        <name>[4Fe-4S] cluster</name>
        <dbReference type="ChEBI" id="CHEBI:49883"/>
        <label>1</label>
        <note>4Fe-4S-S-AdoMet</note>
    </ligand>
</feature>
<feature type="binding site" evidence="1">
    <location>
        <position position="542"/>
    </location>
    <ligand>
        <name>[4Fe-4S] cluster</name>
        <dbReference type="ChEBI" id="CHEBI:49883"/>
        <label>2</label>
        <note>4Fe-4S-S-AdoMet</note>
    </ligand>
</feature>
<feature type="binding site" evidence="1">
    <location>
        <position position="546"/>
    </location>
    <ligand>
        <name>[4Fe-4S] cluster</name>
        <dbReference type="ChEBI" id="CHEBI:49883"/>
        <label>2</label>
        <note>4Fe-4S-S-AdoMet</note>
    </ligand>
</feature>
<feature type="binding site" evidence="1">
    <location>
        <position position="549"/>
    </location>
    <ligand>
        <name>[4Fe-4S] cluster</name>
        <dbReference type="ChEBI" id="CHEBI:49883"/>
        <label>2</label>
        <note>4Fe-4S-S-AdoMet</note>
    </ligand>
</feature>
<evidence type="ECO:0000250" key="1"/>
<evidence type="ECO:0000255" key="2">
    <source>
        <dbReference type="PROSITE-ProRule" id="PRU01266"/>
    </source>
</evidence>
<evidence type="ECO:0000305" key="3"/>